<comment type="catalytic activity">
    <reaction evidence="1">
        <text>(S)-4-amino-5-oxopentanoate = 5-aminolevulinate</text>
        <dbReference type="Rhea" id="RHEA:14265"/>
        <dbReference type="ChEBI" id="CHEBI:57501"/>
        <dbReference type="ChEBI" id="CHEBI:356416"/>
        <dbReference type="EC" id="5.4.3.8"/>
    </reaction>
</comment>
<comment type="cofactor">
    <cofactor evidence="1">
        <name>pyridoxal 5'-phosphate</name>
        <dbReference type="ChEBI" id="CHEBI:597326"/>
    </cofactor>
</comment>
<comment type="pathway">
    <text evidence="1">Porphyrin-containing compound metabolism; protoporphyrin-IX biosynthesis; 5-aminolevulinate from L-glutamyl-tRNA(Glu): step 2/2.</text>
</comment>
<comment type="subunit">
    <text evidence="1">Homodimer.</text>
</comment>
<comment type="subcellular location">
    <subcellularLocation>
        <location evidence="1">Cytoplasm</location>
    </subcellularLocation>
</comment>
<comment type="similarity">
    <text evidence="1">Belongs to the class-III pyridoxal-phosphate-dependent aminotransferase family. HemL subfamily.</text>
</comment>
<proteinExistence type="inferred from homology"/>
<organism>
    <name type="scientific">Clavibacter michiganensis subsp. michiganensis (strain NCPPB 382)</name>
    <dbReference type="NCBI Taxonomy" id="443906"/>
    <lineage>
        <taxon>Bacteria</taxon>
        <taxon>Bacillati</taxon>
        <taxon>Actinomycetota</taxon>
        <taxon>Actinomycetes</taxon>
        <taxon>Micrococcales</taxon>
        <taxon>Microbacteriaceae</taxon>
        <taxon>Clavibacter</taxon>
    </lineage>
</organism>
<evidence type="ECO:0000255" key="1">
    <source>
        <dbReference type="HAMAP-Rule" id="MF_00375"/>
    </source>
</evidence>
<accession>A5CNI7</accession>
<sequence>MTHSQDLFDRARDVIPGGVNSPVRAFGSVGGTPRMMVKAAGPYVTDADGVEYVDLVNSWGPAILGHARPEVVQAVQDAAALGLGFGATTPAETELAELVTDRVRVAGVDGSPDRRPIEKLRLVSTGTEATMTAIRLARGFTGRDLLVKFAGHYHGHSDSLLAEAGSGVATLALPGSAGIPEAIAAQTIVVPYNDLDAVRAVIAEHGPRIAAVITEAAAANMGVVPPLPGFTAELARIAHDNGSLLISDEVLTGFRVHPAGYWGLDNAGLAADHPDAWTPDLVTYGKVIGGGLPVAALGGRADVMDHLAPLGPVYQAGTLSGNPVAVAAGLTTLRLADAGVYRALDIAADILIYAVELAFDRAGLAYSVQRAGSLFSFTFGTPPEHGITDYATVQAQETWRYPAFFHSMLDQGVSLPPSVFEAWFVSAAMDEASLDRVIRALPAAARAAAAATPPA</sequence>
<protein>
    <recommendedName>
        <fullName evidence="1">Glutamate-1-semialdehyde 2,1-aminomutase</fullName>
        <shortName evidence="1">GSA</shortName>
        <ecNumber evidence="1">5.4.3.8</ecNumber>
    </recommendedName>
    <alternativeName>
        <fullName evidence="1">Glutamate-1-semialdehyde aminotransferase</fullName>
        <shortName evidence="1">GSA-AT</shortName>
    </alternativeName>
</protein>
<name>GSA_CLAM3</name>
<feature type="chain" id="PRO_1000059983" description="Glutamate-1-semialdehyde 2,1-aminomutase">
    <location>
        <begin position="1"/>
        <end position="455"/>
    </location>
</feature>
<feature type="modified residue" description="N6-(pyridoxal phosphate)lysine" evidence="1">
    <location>
        <position position="286"/>
    </location>
</feature>
<reference key="1">
    <citation type="journal article" date="2008" name="J. Bacteriol.">
        <title>The genome sequence of the tomato-pathogenic actinomycete Clavibacter michiganensis subsp. michiganensis NCPPB382 reveals a large island involved in pathogenicity.</title>
        <authorList>
            <person name="Gartemann K.-H."/>
            <person name="Abt B."/>
            <person name="Bekel T."/>
            <person name="Burger A."/>
            <person name="Engemann J."/>
            <person name="Fluegel M."/>
            <person name="Gaigalat L."/>
            <person name="Goesmann A."/>
            <person name="Graefen I."/>
            <person name="Kalinowski J."/>
            <person name="Kaup O."/>
            <person name="Kirchner O."/>
            <person name="Krause L."/>
            <person name="Linke B."/>
            <person name="McHardy A."/>
            <person name="Meyer F."/>
            <person name="Pohle S."/>
            <person name="Rueckert C."/>
            <person name="Schneiker S."/>
            <person name="Zellermann E.-M."/>
            <person name="Puehler A."/>
            <person name="Eichenlaub R."/>
            <person name="Kaiser O."/>
            <person name="Bartels D."/>
        </authorList>
    </citation>
    <scope>NUCLEOTIDE SEQUENCE [LARGE SCALE GENOMIC DNA]</scope>
    <source>
        <strain>NCPPB 382</strain>
    </source>
</reference>
<gene>
    <name evidence="1" type="primary">hemL</name>
    <name type="ordered locus">CMM_0599</name>
</gene>
<keyword id="KW-0963">Cytoplasm</keyword>
<keyword id="KW-0413">Isomerase</keyword>
<keyword id="KW-0627">Porphyrin biosynthesis</keyword>
<keyword id="KW-0663">Pyridoxal phosphate</keyword>
<dbReference type="EC" id="5.4.3.8" evidence="1"/>
<dbReference type="EMBL" id="AM711867">
    <property type="protein sequence ID" value="CAN00624.1"/>
    <property type="molecule type" value="Genomic_DNA"/>
</dbReference>
<dbReference type="RefSeq" id="WP_011931819.1">
    <property type="nucleotide sequence ID" value="NC_009480.1"/>
</dbReference>
<dbReference type="SMR" id="A5CNI7"/>
<dbReference type="KEGG" id="cmi:CMM_0599"/>
<dbReference type="eggNOG" id="COG0001">
    <property type="taxonomic scope" value="Bacteria"/>
</dbReference>
<dbReference type="HOGENOM" id="CLU_016922_1_5_11"/>
<dbReference type="OrthoDB" id="9801052at2"/>
<dbReference type="UniPathway" id="UPA00251">
    <property type="reaction ID" value="UER00317"/>
</dbReference>
<dbReference type="Proteomes" id="UP000001564">
    <property type="component" value="Chromosome"/>
</dbReference>
<dbReference type="GO" id="GO:0005737">
    <property type="term" value="C:cytoplasm"/>
    <property type="evidence" value="ECO:0007669"/>
    <property type="project" value="UniProtKB-SubCell"/>
</dbReference>
<dbReference type="GO" id="GO:0042286">
    <property type="term" value="F:glutamate-1-semialdehyde 2,1-aminomutase activity"/>
    <property type="evidence" value="ECO:0007669"/>
    <property type="project" value="UniProtKB-UniRule"/>
</dbReference>
<dbReference type="GO" id="GO:0030170">
    <property type="term" value="F:pyridoxal phosphate binding"/>
    <property type="evidence" value="ECO:0007669"/>
    <property type="project" value="InterPro"/>
</dbReference>
<dbReference type="GO" id="GO:0008483">
    <property type="term" value="F:transaminase activity"/>
    <property type="evidence" value="ECO:0007669"/>
    <property type="project" value="InterPro"/>
</dbReference>
<dbReference type="GO" id="GO:0006782">
    <property type="term" value="P:protoporphyrinogen IX biosynthetic process"/>
    <property type="evidence" value="ECO:0007669"/>
    <property type="project" value="UniProtKB-UniRule"/>
</dbReference>
<dbReference type="CDD" id="cd00610">
    <property type="entry name" value="OAT_like"/>
    <property type="match status" value="1"/>
</dbReference>
<dbReference type="FunFam" id="3.40.640.10:FF:000021">
    <property type="entry name" value="Glutamate-1-semialdehyde 2,1-aminomutase"/>
    <property type="match status" value="1"/>
</dbReference>
<dbReference type="Gene3D" id="3.90.1150.10">
    <property type="entry name" value="Aspartate Aminotransferase, domain 1"/>
    <property type="match status" value="1"/>
</dbReference>
<dbReference type="Gene3D" id="3.40.640.10">
    <property type="entry name" value="Type I PLP-dependent aspartate aminotransferase-like (Major domain)"/>
    <property type="match status" value="1"/>
</dbReference>
<dbReference type="HAMAP" id="MF_00375">
    <property type="entry name" value="HemL_aminotrans_3"/>
    <property type="match status" value="1"/>
</dbReference>
<dbReference type="InterPro" id="IPR004639">
    <property type="entry name" value="4pyrrol_synth_GluAld_NH2Trfase"/>
</dbReference>
<dbReference type="InterPro" id="IPR005814">
    <property type="entry name" value="Aminotrans_3"/>
</dbReference>
<dbReference type="InterPro" id="IPR015424">
    <property type="entry name" value="PyrdxlP-dep_Trfase"/>
</dbReference>
<dbReference type="InterPro" id="IPR015421">
    <property type="entry name" value="PyrdxlP-dep_Trfase_major"/>
</dbReference>
<dbReference type="InterPro" id="IPR015422">
    <property type="entry name" value="PyrdxlP-dep_Trfase_small"/>
</dbReference>
<dbReference type="NCBIfam" id="NF000818">
    <property type="entry name" value="PRK00062.1"/>
    <property type="match status" value="1"/>
</dbReference>
<dbReference type="PANTHER" id="PTHR43713">
    <property type="entry name" value="GLUTAMATE-1-SEMIALDEHYDE 2,1-AMINOMUTASE"/>
    <property type="match status" value="1"/>
</dbReference>
<dbReference type="PANTHER" id="PTHR43713:SF3">
    <property type="entry name" value="GLUTAMATE-1-SEMIALDEHYDE 2,1-AMINOMUTASE 1, CHLOROPLASTIC-RELATED"/>
    <property type="match status" value="1"/>
</dbReference>
<dbReference type="Pfam" id="PF00202">
    <property type="entry name" value="Aminotran_3"/>
    <property type="match status" value="1"/>
</dbReference>
<dbReference type="SUPFAM" id="SSF53383">
    <property type="entry name" value="PLP-dependent transferases"/>
    <property type="match status" value="1"/>
</dbReference>